<accession>B8D897</accession>
<sequence>MKKKIHPRYSKITATCSCGNIIEIFSTINHNINLDICAKCHPFYTGKQRVIDTGGRVERFKKRFKFTKQELN</sequence>
<comment type="function">
    <text evidence="1">Binds the 23S rRNA.</text>
</comment>
<comment type="cofactor">
    <cofactor evidence="1">
        <name>Zn(2+)</name>
        <dbReference type="ChEBI" id="CHEBI:29105"/>
    </cofactor>
    <text evidence="1">Binds 1 zinc ion per subunit.</text>
</comment>
<comment type="subunit">
    <text evidence="1">Part of the 50S ribosomal subunit.</text>
</comment>
<comment type="similarity">
    <text evidence="1">Belongs to the bacterial ribosomal protein bL31 family. Type A subfamily.</text>
</comment>
<dbReference type="EMBL" id="CP001158">
    <property type="protein sequence ID" value="ACL30362.1"/>
    <property type="molecule type" value="Genomic_DNA"/>
</dbReference>
<dbReference type="RefSeq" id="WP_012619590.1">
    <property type="nucleotide sequence ID" value="NC_011834.1"/>
</dbReference>
<dbReference type="SMR" id="B8D897"/>
<dbReference type="KEGG" id="bau:BUAPTUC7_571"/>
<dbReference type="HOGENOM" id="CLU_114306_4_3_6"/>
<dbReference type="GO" id="GO:1990904">
    <property type="term" value="C:ribonucleoprotein complex"/>
    <property type="evidence" value="ECO:0007669"/>
    <property type="project" value="UniProtKB-KW"/>
</dbReference>
<dbReference type="GO" id="GO:0005840">
    <property type="term" value="C:ribosome"/>
    <property type="evidence" value="ECO:0007669"/>
    <property type="project" value="UniProtKB-KW"/>
</dbReference>
<dbReference type="GO" id="GO:0046872">
    <property type="term" value="F:metal ion binding"/>
    <property type="evidence" value="ECO:0007669"/>
    <property type="project" value="UniProtKB-KW"/>
</dbReference>
<dbReference type="GO" id="GO:0019843">
    <property type="term" value="F:rRNA binding"/>
    <property type="evidence" value="ECO:0007669"/>
    <property type="project" value="UniProtKB-KW"/>
</dbReference>
<dbReference type="GO" id="GO:0003735">
    <property type="term" value="F:structural constituent of ribosome"/>
    <property type="evidence" value="ECO:0007669"/>
    <property type="project" value="InterPro"/>
</dbReference>
<dbReference type="GO" id="GO:0006412">
    <property type="term" value="P:translation"/>
    <property type="evidence" value="ECO:0007669"/>
    <property type="project" value="UniProtKB-UniRule"/>
</dbReference>
<dbReference type="Gene3D" id="4.10.830.30">
    <property type="entry name" value="Ribosomal protein L31"/>
    <property type="match status" value="1"/>
</dbReference>
<dbReference type="HAMAP" id="MF_00501">
    <property type="entry name" value="Ribosomal_bL31_1"/>
    <property type="match status" value="1"/>
</dbReference>
<dbReference type="InterPro" id="IPR034704">
    <property type="entry name" value="Ribosomal_bL28/bL31-like_sf"/>
</dbReference>
<dbReference type="InterPro" id="IPR002150">
    <property type="entry name" value="Ribosomal_bL31"/>
</dbReference>
<dbReference type="InterPro" id="IPR027491">
    <property type="entry name" value="Ribosomal_bL31_A"/>
</dbReference>
<dbReference type="InterPro" id="IPR042105">
    <property type="entry name" value="Ribosomal_bL31_sf"/>
</dbReference>
<dbReference type="NCBIfam" id="TIGR00105">
    <property type="entry name" value="L31"/>
    <property type="match status" value="1"/>
</dbReference>
<dbReference type="NCBIfam" id="NF000612">
    <property type="entry name" value="PRK00019.1"/>
    <property type="match status" value="1"/>
</dbReference>
<dbReference type="PANTHER" id="PTHR33280">
    <property type="entry name" value="50S RIBOSOMAL PROTEIN L31, CHLOROPLASTIC"/>
    <property type="match status" value="1"/>
</dbReference>
<dbReference type="PANTHER" id="PTHR33280:SF6">
    <property type="entry name" value="LARGE RIBOSOMAL SUBUNIT PROTEIN BL31A"/>
    <property type="match status" value="1"/>
</dbReference>
<dbReference type="Pfam" id="PF01197">
    <property type="entry name" value="Ribosomal_L31"/>
    <property type="match status" value="1"/>
</dbReference>
<dbReference type="PRINTS" id="PR01249">
    <property type="entry name" value="RIBOSOMALL31"/>
</dbReference>
<dbReference type="SUPFAM" id="SSF143800">
    <property type="entry name" value="L28p-like"/>
    <property type="match status" value="1"/>
</dbReference>
<dbReference type="PROSITE" id="PS01143">
    <property type="entry name" value="RIBOSOMAL_L31"/>
    <property type="match status" value="1"/>
</dbReference>
<gene>
    <name evidence="1" type="primary">rpmE</name>
    <name type="ordered locus">BUAPTUC7_571</name>
</gene>
<organism>
    <name type="scientific">Buchnera aphidicola subsp. Acyrthosiphon pisum (strain Tuc7)</name>
    <dbReference type="NCBI Taxonomy" id="561501"/>
    <lineage>
        <taxon>Bacteria</taxon>
        <taxon>Pseudomonadati</taxon>
        <taxon>Pseudomonadota</taxon>
        <taxon>Gammaproteobacteria</taxon>
        <taxon>Enterobacterales</taxon>
        <taxon>Erwiniaceae</taxon>
        <taxon>Buchnera</taxon>
    </lineage>
</organism>
<name>RL31_BUCAT</name>
<feature type="chain" id="PRO_1000176952" description="Large ribosomal subunit protein bL31">
    <location>
        <begin position="1"/>
        <end position="72"/>
    </location>
</feature>
<feature type="binding site" evidence="1">
    <location>
        <position position="16"/>
    </location>
    <ligand>
        <name>Zn(2+)</name>
        <dbReference type="ChEBI" id="CHEBI:29105"/>
    </ligand>
</feature>
<feature type="binding site" evidence="1">
    <location>
        <position position="18"/>
    </location>
    <ligand>
        <name>Zn(2+)</name>
        <dbReference type="ChEBI" id="CHEBI:29105"/>
    </ligand>
</feature>
<feature type="binding site" evidence="1">
    <location>
        <position position="37"/>
    </location>
    <ligand>
        <name>Zn(2+)</name>
        <dbReference type="ChEBI" id="CHEBI:29105"/>
    </ligand>
</feature>
<feature type="binding site" evidence="1">
    <location>
        <position position="40"/>
    </location>
    <ligand>
        <name>Zn(2+)</name>
        <dbReference type="ChEBI" id="CHEBI:29105"/>
    </ligand>
</feature>
<reference key="1">
    <citation type="journal article" date="2009" name="Science">
        <title>The dynamics and time scale of ongoing genomic erosion in symbiotic bacteria.</title>
        <authorList>
            <person name="Moran N.A."/>
            <person name="McLaughlin H.J."/>
            <person name="Sorek R."/>
        </authorList>
    </citation>
    <scope>NUCLEOTIDE SEQUENCE [LARGE SCALE GENOMIC DNA]</scope>
    <source>
        <strain>Tuc7</strain>
    </source>
</reference>
<evidence type="ECO:0000255" key="1">
    <source>
        <dbReference type="HAMAP-Rule" id="MF_00501"/>
    </source>
</evidence>
<evidence type="ECO:0000305" key="2"/>
<keyword id="KW-0479">Metal-binding</keyword>
<keyword id="KW-0687">Ribonucleoprotein</keyword>
<keyword id="KW-0689">Ribosomal protein</keyword>
<keyword id="KW-0694">RNA-binding</keyword>
<keyword id="KW-0699">rRNA-binding</keyword>
<keyword id="KW-0862">Zinc</keyword>
<protein>
    <recommendedName>
        <fullName evidence="1">Large ribosomal subunit protein bL31</fullName>
    </recommendedName>
    <alternativeName>
        <fullName evidence="2">50S ribosomal protein L31</fullName>
    </alternativeName>
</protein>
<proteinExistence type="inferred from homology"/>